<protein>
    <recommendedName>
        <fullName evidence="1">Large ribosomal subunit protein uL16c</fullName>
    </recommendedName>
    <alternativeName>
        <fullName evidence="2">50S ribosomal protein L16, chloroplastic</fullName>
    </alternativeName>
</protein>
<proteinExistence type="inferred from homology"/>
<keyword id="KW-0150">Chloroplast</keyword>
<keyword id="KW-0934">Plastid</keyword>
<keyword id="KW-0687">Ribonucleoprotein</keyword>
<keyword id="KW-0689">Ribosomal protein</keyword>
<evidence type="ECO:0000255" key="1">
    <source>
        <dbReference type="HAMAP-Rule" id="MF_01342"/>
    </source>
</evidence>
<evidence type="ECO:0000305" key="2"/>
<geneLocation type="chloroplast"/>
<accession>A4QLX0</accession>
<organism>
    <name type="scientific">Nasturtium officinale</name>
    <name type="common">Watercress</name>
    <name type="synonym">Rorippa nasturtium-aquaticum</name>
    <dbReference type="NCBI Taxonomy" id="65948"/>
    <lineage>
        <taxon>Eukaryota</taxon>
        <taxon>Viridiplantae</taxon>
        <taxon>Streptophyta</taxon>
        <taxon>Embryophyta</taxon>
        <taxon>Tracheophyta</taxon>
        <taxon>Spermatophyta</taxon>
        <taxon>Magnoliopsida</taxon>
        <taxon>eudicotyledons</taxon>
        <taxon>Gunneridae</taxon>
        <taxon>Pentapetalae</taxon>
        <taxon>rosids</taxon>
        <taxon>malvids</taxon>
        <taxon>Brassicales</taxon>
        <taxon>Brassicaceae</taxon>
        <taxon>Cardamineae</taxon>
        <taxon>Nasturtium</taxon>
    </lineage>
</organism>
<name>RK16_NASOF</name>
<reference key="1">
    <citation type="submission" date="2007-03" db="EMBL/GenBank/DDBJ databases">
        <title>Sequencing analysis of Nasturtium officinale chloroplast DNA.</title>
        <authorList>
            <person name="Hosouchi T."/>
            <person name="Tsuruoka H."/>
            <person name="Kotani H."/>
        </authorList>
    </citation>
    <scope>NUCLEOTIDE SEQUENCE [LARGE SCALE GENOMIC DNA]</scope>
</reference>
<dbReference type="EMBL" id="AP009376">
    <property type="protein sequence ID" value="BAF50675.1"/>
    <property type="molecule type" value="Genomic_DNA"/>
</dbReference>
<dbReference type="RefSeq" id="YP_001123851.1">
    <property type="nucleotide sequence ID" value="NC_009275.1"/>
</dbReference>
<dbReference type="SMR" id="A4QLX0"/>
<dbReference type="GeneID" id="4962200"/>
<dbReference type="GO" id="GO:0009507">
    <property type="term" value="C:chloroplast"/>
    <property type="evidence" value="ECO:0007669"/>
    <property type="project" value="UniProtKB-SubCell"/>
</dbReference>
<dbReference type="GO" id="GO:0005762">
    <property type="term" value="C:mitochondrial large ribosomal subunit"/>
    <property type="evidence" value="ECO:0007669"/>
    <property type="project" value="TreeGrafter"/>
</dbReference>
<dbReference type="GO" id="GO:0019843">
    <property type="term" value="F:rRNA binding"/>
    <property type="evidence" value="ECO:0007669"/>
    <property type="project" value="InterPro"/>
</dbReference>
<dbReference type="GO" id="GO:0003735">
    <property type="term" value="F:structural constituent of ribosome"/>
    <property type="evidence" value="ECO:0007669"/>
    <property type="project" value="InterPro"/>
</dbReference>
<dbReference type="GO" id="GO:0032543">
    <property type="term" value="P:mitochondrial translation"/>
    <property type="evidence" value="ECO:0007669"/>
    <property type="project" value="TreeGrafter"/>
</dbReference>
<dbReference type="CDD" id="cd01433">
    <property type="entry name" value="Ribosomal_L16_L10e"/>
    <property type="match status" value="1"/>
</dbReference>
<dbReference type="FunFam" id="3.90.1170.10:FF:000001">
    <property type="entry name" value="50S ribosomal protein L16"/>
    <property type="match status" value="1"/>
</dbReference>
<dbReference type="Gene3D" id="3.90.1170.10">
    <property type="entry name" value="Ribosomal protein L10e/L16"/>
    <property type="match status" value="1"/>
</dbReference>
<dbReference type="HAMAP" id="MF_01342">
    <property type="entry name" value="Ribosomal_uL16"/>
    <property type="match status" value="1"/>
</dbReference>
<dbReference type="InterPro" id="IPR047873">
    <property type="entry name" value="Ribosomal_uL16"/>
</dbReference>
<dbReference type="InterPro" id="IPR000114">
    <property type="entry name" value="Ribosomal_uL16_bact-type"/>
</dbReference>
<dbReference type="InterPro" id="IPR020798">
    <property type="entry name" value="Ribosomal_uL16_CS"/>
</dbReference>
<dbReference type="InterPro" id="IPR016180">
    <property type="entry name" value="Ribosomal_uL16_dom"/>
</dbReference>
<dbReference type="InterPro" id="IPR036920">
    <property type="entry name" value="Ribosomal_uL16_sf"/>
</dbReference>
<dbReference type="NCBIfam" id="TIGR01164">
    <property type="entry name" value="rplP_bact"/>
    <property type="match status" value="1"/>
</dbReference>
<dbReference type="PANTHER" id="PTHR12220">
    <property type="entry name" value="50S/60S RIBOSOMAL PROTEIN L16"/>
    <property type="match status" value="1"/>
</dbReference>
<dbReference type="PANTHER" id="PTHR12220:SF13">
    <property type="entry name" value="LARGE RIBOSOMAL SUBUNIT PROTEIN UL16M"/>
    <property type="match status" value="1"/>
</dbReference>
<dbReference type="Pfam" id="PF00252">
    <property type="entry name" value="Ribosomal_L16"/>
    <property type="match status" value="1"/>
</dbReference>
<dbReference type="PRINTS" id="PR00060">
    <property type="entry name" value="RIBOSOMALL16"/>
</dbReference>
<dbReference type="SUPFAM" id="SSF54686">
    <property type="entry name" value="Ribosomal protein L16p/L10e"/>
    <property type="match status" value="1"/>
</dbReference>
<dbReference type="PROSITE" id="PS00586">
    <property type="entry name" value="RIBOSOMAL_L16_1"/>
    <property type="match status" value="1"/>
</dbReference>
<dbReference type="PROSITE" id="PS00701">
    <property type="entry name" value="RIBOSOMAL_L16_2"/>
    <property type="match status" value="1"/>
</dbReference>
<feature type="chain" id="PRO_0000354647" description="Large ribosomal subunit protein uL16c">
    <location>
        <begin position="1"/>
        <end position="135"/>
    </location>
</feature>
<sequence length="135" mass="15294">MLSPKRTRFRKQHRGRLKGISSRGNRICFGRYALQTLEPAWITSRQIEAGRRAMTRNVRRGGKIWVRIFPDKPVTVRPAETRMGSGKGSPEYWVAVVKPGKILYEMGGVPENIARKAISIAASKMPIKTQFIISE</sequence>
<gene>
    <name evidence="1" type="primary">rpl16</name>
</gene>
<comment type="subunit">
    <text evidence="1">Part of the 50S ribosomal subunit.</text>
</comment>
<comment type="subcellular location">
    <subcellularLocation>
        <location>Plastid</location>
        <location>Chloroplast</location>
    </subcellularLocation>
</comment>
<comment type="similarity">
    <text evidence="1">Belongs to the universal ribosomal protein uL16 family.</text>
</comment>